<sequence length="540" mass="58598">MTRPRPVVLIIMDGWGIAPPGPGNAADLADTPHVDAWMANCPFTTLGASGLDVGLPEGQIGNSEVGHLNIGAGFVVYQELTRISKAIADGDFFTNPVLLQAIEHVKQRNSALHLMGLFGPGGVHAHEDHLHALLELAHRHHLQRVYLHLFLDGRDVLPRSALGFLDTLEGVIARLGVGTIATVSGRYYAMDRDKRWERTGRAYAALVDGVGEKAPSARAAIEASYARDVSDEFVLPTVIVTASGEPTATVRDGDAVIFTNFRPDRGRQLTRAFVDPDLNERIRQHYERQKAEGQPLPATIWQRERQLRDLCFVTMTQYEEGLPVLVAFPPRYVTNPLAAVISQAGLRQFHIAETEKYPHVTFFLNGGREEPFPGEDRQLIPSPKVATYDLKPEMSAPEVTEALLAAIDSDQYDFIVVNYANPDMVGHTGSIPAVIKACEAVDAGLARVVPAILERGGVALVIADHGNAEQMIDPETGGPHTAHTTNPAPCFLIGGAGYGKDAIELRHGGRLADVAPTLLELLELEPSPDMTGQSLIVRRA</sequence>
<comment type="function">
    <text evidence="1">Catalyzes the interconversion of 2-phosphoglycerate and 3-phosphoglycerate.</text>
</comment>
<comment type="catalytic activity">
    <reaction evidence="1">
        <text>(2R)-2-phosphoglycerate = (2R)-3-phosphoglycerate</text>
        <dbReference type="Rhea" id="RHEA:15901"/>
        <dbReference type="ChEBI" id="CHEBI:58272"/>
        <dbReference type="ChEBI" id="CHEBI:58289"/>
        <dbReference type="EC" id="5.4.2.12"/>
    </reaction>
</comment>
<comment type="cofactor">
    <cofactor evidence="1">
        <name>Mn(2+)</name>
        <dbReference type="ChEBI" id="CHEBI:29035"/>
    </cofactor>
    <text evidence="1">Binds 2 manganese ions per subunit.</text>
</comment>
<comment type="pathway">
    <text evidence="1">Carbohydrate degradation; glycolysis; pyruvate from D-glyceraldehyde 3-phosphate: step 3/5.</text>
</comment>
<comment type="subunit">
    <text evidence="1">Monomer.</text>
</comment>
<comment type="similarity">
    <text evidence="1">Belongs to the BPG-independent phosphoglycerate mutase family.</text>
</comment>
<gene>
    <name evidence="1" type="primary">gpmI</name>
    <name type="ordered locus">Caur_1142</name>
</gene>
<dbReference type="EC" id="5.4.2.12" evidence="1"/>
<dbReference type="EMBL" id="CP000909">
    <property type="protein sequence ID" value="ABY34372.1"/>
    <property type="molecule type" value="Genomic_DNA"/>
</dbReference>
<dbReference type="RefSeq" id="WP_012257028.1">
    <property type="nucleotide sequence ID" value="NC_010175.1"/>
</dbReference>
<dbReference type="RefSeq" id="YP_001634761.1">
    <property type="nucleotide sequence ID" value="NC_010175.1"/>
</dbReference>
<dbReference type="SMR" id="A9WJ95"/>
<dbReference type="FunCoup" id="A9WJ95">
    <property type="interactions" value="323"/>
</dbReference>
<dbReference type="STRING" id="324602.Caur_1142"/>
<dbReference type="EnsemblBacteria" id="ABY34372">
    <property type="protein sequence ID" value="ABY34372"/>
    <property type="gene ID" value="Caur_1142"/>
</dbReference>
<dbReference type="KEGG" id="cau:Caur_1142"/>
<dbReference type="PATRIC" id="fig|324602.8.peg.1306"/>
<dbReference type="eggNOG" id="COG0696">
    <property type="taxonomic scope" value="Bacteria"/>
</dbReference>
<dbReference type="HOGENOM" id="CLU_026099_2_0_0"/>
<dbReference type="InParanoid" id="A9WJ95"/>
<dbReference type="UniPathway" id="UPA00109">
    <property type="reaction ID" value="UER00186"/>
</dbReference>
<dbReference type="Proteomes" id="UP000002008">
    <property type="component" value="Chromosome"/>
</dbReference>
<dbReference type="GO" id="GO:0005829">
    <property type="term" value="C:cytosol"/>
    <property type="evidence" value="ECO:0000318"/>
    <property type="project" value="GO_Central"/>
</dbReference>
<dbReference type="GO" id="GO:0030145">
    <property type="term" value="F:manganese ion binding"/>
    <property type="evidence" value="ECO:0000318"/>
    <property type="project" value="GO_Central"/>
</dbReference>
<dbReference type="GO" id="GO:0004619">
    <property type="term" value="F:phosphoglycerate mutase activity"/>
    <property type="evidence" value="ECO:0000318"/>
    <property type="project" value="GO_Central"/>
</dbReference>
<dbReference type="GO" id="GO:0005975">
    <property type="term" value="P:carbohydrate metabolic process"/>
    <property type="evidence" value="ECO:0000318"/>
    <property type="project" value="GO_Central"/>
</dbReference>
<dbReference type="GO" id="GO:0006007">
    <property type="term" value="P:glucose catabolic process"/>
    <property type="evidence" value="ECO:0007669"/>
    <property type="project" value="InterPro"/>
</dbReference>
<dbReference type="GO" id="GO:0006096">
    <property type="term" value="P:glycolytic process"/>
    <property type="evidence" value="ECO:0007669"/>
    <property type="project" value="UniProtKB-UniRule"/>
</dbReference>
<dbReference type="CDD" id="cd16010">
    <property type="entry name" value="iPGM"/>
    <property type="match status" value="1"/>
</dbReference>
<dbReference type="FunFam" id="3.40.1450.10:FF:000001">
    <property type="entry name" value="2,3-bisphosphoglycerate-independent phosphoglycerate mutase"/>
    <property type="match status" value="1"/>
</dbReference>
<dbReference type="Gene3D" id="3.40.720.10">
    <property type="entry name" value="Alkaline Phosphatase, subunit A"/>
    <property type="match status" value="1"/>
</dbReference>
<dbReference type="Gene3D" id="3.40.1450.10">
    <property type="entry name" value="BPG-independent phosphoglycerate mutase, domain B"/>
    <property type="match status" value="1"/>
</dbReference>
<dbReference type="HAMAP" id="MF_01038">
    <property type="entry name" value="GpmI"/>
    <property type="match status" value="1"/>
</dbReference>
<dbReference type="InterPro" id="IPR017850">
    <property type="entry name" value="Alkaline_phosphatase_core_sf"/>
</dbReference>
<dbReference type="InterPro" id="IPR011258">
    <property type="entry name" value="BPG-indep_PGM_N"/>
</dbReference>
<dbReference type="InterPro" id="IPR006124">
    <property type="entry name" value="Metalloenzyme"/>
</dbReference>
<dbReference type="InterPro" id="IPR036646">
    <property type="entry name" value="PGAM_B_sf"/>
</dbReference>
<dbReference type="InterPro" id="IPR005995">
    <property type="entry name" value="Pgm_bpd_ind"/>
</dbReference>
<dbReference type="NCBIfam" id="TIGR01307">
    <property type="entry name" value="pgm_bpd_ind"/>
    <property type="match status" value="1"/>
</dbReference>
<dbReference type="PANTHER" id="PTHR31637">
    <property type="entry name" value="2,3-BISPHOSPHOGLYCERATE-INDEPENDENT PHOSPHOGLYCERATE MUTASE"/>
    <property type="match status" value="1"/>
</dbReference>
<dbReference type="PANTHER" id="PTHR31637:SF0">
    <property type="entry name" value="2,3-BISPHOSPHOGLYCERATE-INDEPENDENT PHOSPHOGLYCERATE MUTASE"/>
    <property type="match status" value="1"/>
</dbReference>
<dbReference type="Pfam" id="PF06415">
    <property type="entry name" value="iPGM_N"/>
    <property type="match status" value="1"/>
</dbReference>
<dbReference type="Pfam" id="PF01676">
    <property type="entry name" value="Metalloenzyme"/>
    <property type="match status" value="1"/>
</dbReference>
<dbReference type="PIRSF" id="PIRSF001492">
    <property type="entry name" value="IPGAM"/>
    <property type="match status" value="1"/>
</dbReference>
<dbReference type="SUPFAM" id="SSF64158">
    <property type="entry name" value="2,3-Bisphosphoglycerate-independent phosphoglycerate mutase, substrate-binding domain"/>
    <property type="match status" value="1"/>
</dbReference>
<dbReference type="SUPFAM" id="SSF53649">
    <property type="entry name" value="Alkaline phosphatase-like"/>
    <property type="match status" value="1"/>
</dbReference>
<feature type="chain" id="PRO_1000135896" description="2,3-bisphosphoglycerate-independent phosphoglycerate mutase">
    <location>
        <begin position="1"/>
        <end position="540"/>
    </location>
</feature>
<feature type="active site" description="Phosphoserine intermediate" evidence="1">
    <location>
        <position position="63"/>
    </location>
</feature>
<feature type="binding site" evidence="1">
    <location>
        <position position="13"/>
    </location>
    <ligand>
        <name>Mn(2+)</name>
        <dbReference type="ChEBI" id="CHEBI:29035"/>
        <label>2</label>
    </ligand>
</feature>
<feature type="binding site" evidence="1">
    <location>
        <position position="63"/>
    </location>
    <ligand>
        <name>Mn(2+)</name>
        <dbReference type="ChEBI" id="CHEBI:29035"/>
        <label>2</label>
    </ligand>
</feature>
<feature type="binding site" evidence="1">
    <location>
        <position position="124"/>
    </location>
    <ligand>
        <name>substrate</name>
    </ligand>
</feature>
<feature type="binding site" evidence="1">
    <location>
        <begin position="154"/>
        <end position="155"/>
    </location>
    <ligand>
        <name>substrate</name>
    </ligand>
</feature>
<feature type="binding site" evidence="1">
    <location>
        <position position="186"/>
    </location>
    <ligand>
        <name>substrate</name>
    </ligand>
</feature>
<feature type="binding site" evidence="1">
    <location>
        <position position="192"/>
    </location>
    <ligand>
        <name>substrate</name>
    </ligand>
</feature>
<feature type="binding site" evidence="1">
    <location>
        <begin position="262"/>
        <end position="265"/>
    </location>
    <ligand>
        <name>substrate</name>
    </ligand>
</feature>
<feature type="binding site" evidence="1">
    <location>
        <position position="356"/>
    </location>
    <ligand>
        <name>substrate</name>
    </ligand>
</feature>
<feature type="binding site" evidence="1">
    <location>
        <position position="423"/>
    </location>
    <ligand>
        <name>Mn(2+)</name>
        <dbReference type="ChEBI" id="CHEBI:29035"/>
        <label>1</label>
    </ligand>
</feature>
<feature type="binding site" evidence="1">
    <location>
        <position position="427"/>
    </location>
    <ligand>
        <name>Mn(2+)</name>
        <dbReference type="ChEBI" id="CHEBI:29035"/>
        <label>1</label>
    </ligand>
</feature>
<feature type="binding site" evidence="1">
    <location>
        <position position="464"/>
    </location>
    <ligand>
        <name>Mn(2+)</name>
        <dbReference type="ChEBI" id="CHEBI:29035"/>
        <label>2</label>
    </ligand>
</feature>
<feature type="binding site" evidence="1">
    <location>
        <position position="465"/>
    </location>
    <ligand>
        <name>Mn(2+)</name>
        <dbReference type="ChEBI" id="CHEBI:29035"/>
        <label>2</label>
    </ligand>
</feature>
<feature type="binding site" evidence="1">
    <location>
        <position position="483"/>
    </location>
    <ligand>
        <name>Mn(2+)</name>
        <dbReference type="ChEBI" id="CHEBI:29035"/>
        <label>1</label>
    </ligand>
</feature>
<accession>A9WJ95</accession>
<proteinExistence type="inferred from homology"/>
<evidence type="ECO:0000255" key="1">
    <source>
        <dbReference type="HAMAP-Rule" id="MF_01038"/>
    </source>
</evidence>
<name>GPMI_CHLAA</name>
<protein>
    <recommendedName>
        <fullName evidence="1">2,3-bisphosphoglycerate-independent phosphoglycerate mutase</fullName>
        <shortName evidence="1">BPG-independent PGAM</shortName>
        <shortName evidence="1">Phosphoglyceromutase</shortName>
        <shortName evidence="1">iPGM</shortName>
        <ecNumber evidence="1">5.4.2.12</ecNumber>
    </recommendedName>
</protein>
<reference key="1">
    <citation type="journal article" date="2011" name="BMC Genomics">
        <title>Complete genome sequence of the filamentous anoxygenic phototrophic bacterium Chloroflexus aurantiacus.</title>
        <authorList>
            <person name="Tang K.H."/>
            <person name="Barry K."/>
            <person name="Chertkov O."/>
            <person name="Dalin E."/>
            <person name="Han C.S."/>
            <person name="Hauser L.J."/>
            <person name="Honchak B.M."/>
            <person name="Karbach L.E."/>
            <person name="Land M.L."/>
            <person name="Lapidus A."/>
            <person name="Larimer F.W."/>
            <person name="Mikhailova N."/>
            <person name="Pitluck S."/>
            <person name="Pierson B.K."/>
            <person name="Blankenship R.E."/>
        </authorList>
    </citation>
    <scope>NUCLEOTIDE SEQUENCE [LARGE SCALE GENOMIC DNA]</scope>
    <source>
        <strain>ATCC 29366 / DSM 635 / J-10-fl</strain>
    </source>
</reference>
<keyword id="KW-0324">Glycolysis</keyword>
<keyword id="KW-0413">Isomerase</keyword>
<keyword id="KW-0464">Manganese</keyword>
<keyword id="KW-0479">Metal-binding</keyword>
<keyword id="KW-1185">Reference proteome</keyword>
<organism>
    <name type="scientific">Chloroflexus aurantiacus (strain ATCC 29366 / DSM 635 / J-10-fl)</name>
    <dbReference type="NCBI Taxonomy" id="324602"/>
    <lineage>
        <taxon>Bacteria</taxon>
        <taxon>Bacillati</taxon>
        <taxon>Chloroflexota</taxon>
        <taxon>Chloroflexia</taxon>
        <taxon>Chloroflexales</taxon>
        <taxon>Chloroflexineae</taxon>
        <taxon>Chloroflexaceae</taxon>
        <taxon>Chloroflexus</taxon>
    </lineage>
</organism>